<gene>
    <name evidence="1" type="primary">ispD</name>
    <name type="ordered locus">MRA_3621</name>
</gene>
<feature type="chain" id="PRO_1000022931" description="2-C-methyl-D-erythritol 4-phosphate cytidylyltransferase">
    <location>
        <begin position="1"/>
        <end position="231"/>
    </location>
</feature>
<feature type="site" description="Transition state stabilizer" evidence="1">
    <location>
        <position position="20"/>
    </location>
</feature>
<feature type="site" description="Transition state stabilizer" evidence="1">
    <location>
        <position position="27"/>
    </location>
</feature>
<feature type="site" description="Positions MEP for the nucleophilic attack" evidence="1">
    <location>
        <position position="157"/>
    </location>
</feature>
<feature type="site" description="Positions MEP for the nucleophilic attack" evidence="1">
    <location>
        <position position="215"/>
    </location>
</feature>
<proteinExistence type="inferred from homology"/>
<evidence type="ECO:0000255" key="1">
    <source>
        <dbReference type="HAMAP-Rule" id="MF_00108"/>
    </source>
</evidence>
<name>ISPD_MYCTA</name>
<protein>
    <recommendedName>
        <fullName evidence="1">2-C-methyl-D-erythritol 4-phosphate cytidylyltransferase</fullName>
        <ecNumber evidence="1">2.7.7.60</ecNumber>
    </recommendedName>
    <alternativeName>
        <fullName evidence="1">4-diphosphocytidyl-2C-methyl-D-erythritol synthase</fullName>
    </alternativeName>
    <alternativeName>
        <fullName evidence="1">MEP cytidylyltransferase</fullName>
        <shortName evidence="1">MCT</shortName>
    </alternativeName>
</protein>
<keyword id="KW-0414">Isoprene biosynthesis</keyword>
<keyword id="KW-0548">Nucleotidyltransferase</keyword>
<keyword id="KW-1185">Reference proteome</keyword>
<keyword id="KW-0808">Transferase</keyword>
<comment type="function">
    <text evidence="1">Catalyzes the formation of 4-diphosphocytidyl-2-C-methyl-D-erythritol from CTP and 2-C-methyl-D-erythritol 4-phosphate (MEP).</text>
</comment>
<comment type="catalytic activity">
    <reaction evidence="1">
        <text>2-C-methyl-D-erythritol 4-phosphate + CTP + H(+) = 4-CDP-2-C-methyl-D-erythritol + diphosphate</text>
        <dbReference type="Rhea" id="RHEA:13429"/>
        <dbReference type="ChEBI" id="CHEBI:15378"/>
        <dbReference type="ChEBI" id="CHEBI:33019"/>
        <dbReference type="ChEBI" id="CHEBI:37563"/>
        <dbReference type="ChEBI" id="CHEBI:57823"/>
        <dbReference type="ChEBI" id="CHEBI:58262"/>
        <dbReference type="EC" id="2.7.7.60"/>
    </reaction>
</comment>
<comment type="pathway">
    <text evidence="1">Isoprenoid biosynthesis; isopentenyl diphosphate biosynthesis via DXP pathway; isopentenyl diphosphate from 1-deoxy-D-xylulose 5-phosphate: step 2/6.</text>
</comment>
<comment type="similarity">
    <text evidence="1">Belongs to the IspD/TarI cytidylyltransferase family. IspD subfamily.</text>
</comment>
<accession>A5U8Q7</accession>
<reference key="1">
    <citation type="journal article" date="2008" name="PLoS ONE">
        <title>Genetic basis of virulence attenuation revealed by comparative genomic analysis of Mycobacterium tuberculosis strain H37Ra versus H37Rv.</title>
        <authorList>
            <person name="Zheng H."/>
            <person name="Lu L."/>
            <person name="Wang B."/>
            <person name="Pu S."/>
            <person name="Zhang X."/>
            <person name="Zhu G."/>
            <person name="Shi W."/>
            <person name="Zhang L."/>
            <person name="Wang H."/>
            <person name="Wang S."/>
            <person name="Zhao G."/>
            <person name="Zhang Y."/>
        </authorList>
    </citation>
    <scope>NUCLEOTIDE SEQUENCE [LARGE SCALE GENOMIC DNA]</scope>
    <source>
        <strain>ATCC 25177 / H37Ra</strain>
    </source>
</reference>
<organism>
    <name type="scientific">Mycobacterium tuberculosis (strain ATCC 25177 / H37Ra)</name>
    <dbReference type="NCBI Taxonomy" id="419947"/>
    <lineage>
        <taxon>Bacteria</taxon>
        <taxon>Bacillati</taxon>
        <taxon>Actinomycetota</taxon>
        <taxon>Actinomycetes</taxon>
        <taxon>Mycobacteriales</taxon>
        <taxon>Mycobacteriaceae</taxon>
        <taxon>Mycobacterium</taxon>
        <taxon>Mycobacterium tuberculosis complex</taxon>
    </lineage>
</organism>
<dbReference type="EC" id="2.7.7.60" evidence="1"/>
<dbReference type="EMBL" id="CP000611">
    <property type="protein sequence ID" value="ABQ75407.1"/>
    <property type="molecule type" value="Genomic_DNA"/>
</dbReference>
<dbReference type="RefSeq" id="WP_003419436.1">
    <property type="nucleotide sequence ID" value="NZ_CP016972.1"/>
</dbReference>
<dbReference type="SMR" id="A5U8Q7"/>
<dbReference type="GeneID" id="45427570"/>
<dbReference type="KEGG" id="mra:MRA_3621"/>
<dbReference type="eggNOG" id="COG1211">
    <property type="taxonomic scope" value="Bacteria"/>
</dbReference>
<dbReference type="HOGENOM" id="CLU_061281_1_1_11"/>
<dbReference type="UniPathway" id="UPA00056">
    <property type="reaction ID" value="UER00093"/>
</dbReference>
<dbReference type="Proteomes" id="UP000001988">
    <property type="component" value="Chromosome"/>
</dbReference>
<dbReference type="GO" id="GO:0050518">
    <property type="term" value="F:2-C-methyl-D-erythritol 4-phosphate cytidylyltransferase activity"/>
    <property type="evidence" value="ECO:0007669"/>
    <property type="project" value="UniProtKB-UniRule"/>
</dbReference>
<dbReference type="GO" id="GO:0019288">
    <property type="term" value="P:isopentenyl diphosphate biosynthetic process, methylerythritol 4-phosphate pathway"/>
    <property type="evidence" value="ECO:0007669"/>
    <property type="project" value="UniProtKB-UniRule"/>
</dbReference>
<dbReference type="CDD" id="cd02516">
    <property type="entry name" value="CDP-ME_synthetase"/>
    <property type="match status" value="1"/>
</dbReference>
<dbReference type="FunFam" id="3.90.550.10:FF:000208">
    <property type="entry name" value="2-C-methyl-D-erythritol 4-phosphate cytidylyltransferase"/>
    <property type="match status" value="1"/>
</dbReference>
<dbReference type="Gene3D" id="3.90.550.10">
    <property type="entry name" value="Spore Coat Polysaccharide Biosynthesis Protein SpsA, Chain A"/>
    <property type="match status" value="1"/>
</dbReference>
<dbReference type="HAMAP" id="MF_00108">
    <property type="entry name" value="IspD"/>
    <property type="match status" value="1"/>
</dbReference>
<dbReference type="InterPro" id="IPR001228">
    <property type="entry name" value="IspD"/>
</dbReference>
<dbReference type="InterPro" id="IPR034683">
    <property type="entry name" value="IspD/TarI"/>
</dbReference>
<dbReference type="InterPro" id="IPR050088">
    <property type="entry name" value="IspD/TarI_cytidylyltransf_bact"/>
</dbReference>
<dbReference type="InterPro" id="IPR018294">
    <property type="entry name" value="ISPD_synthase_CS"/>
</dbReference>
<dbReference type="InterPro" id="IPR029044">
    <property type="entry name" value="Nucleotide-diphossugar_trans"/>
</dbReference>
<dbReference type="NCBIfam" id="TIGR00453">
    <property type="entry name" value="ispD"/>
    <property type="match status" value="1"/>
</dbReference>
<dbReference type="PANTHER" id="PTHR32125">
    <property type="entry name" value="2-C-METHYL-D-ERYTHRITOL 4-PHOSPHATE CYTIDYLYLTRANSFERASE, CHLOROPLASTIC"/>
    <property type="match status" value="1"/>
</dbReference>
<dbReference type="PANTHER" id="PTHR32125:SF4">
    <property type="entry name" value="2-C-METHYL-D-ERYTHRITOL 4-PHOSPHATE CYTIDYLYLTRANSFERASE, CHLOROPLASTIC"/>
    <property type="match status" value="1"/>
</dbReference>
<dbReference type="Pfam" id="PF01128">
    <property type="entry name" value="IspD"/>
    <property type="match status" value="1"/>
</dbReference>
<dbReference type="SUPFAM" id="SSF53448">
    <property type="entry name" value="Nucleotide-diphospho-sugar transferases"/>
    <property type="match status" value="1"/>
</dbReference>
<dbReference type="PROSITE" id="PS01295">
    <property type="entry name" value="ISPD"/>
    <property type="match status" value="1"/>
</dbReference>
<sequence>MVREAGEVVAIVPAAGSGERLAVGVPKAFYQLDGQTLIERAVDGLLDSGVVDTVVVAVPADRTDEARQILGHRAMIVAGGSNRTDTVNLALTVLSGTAEPEFVLVHDAARALTPPALVARVVEALRDGYAAVVPVLPLSDTIKAVDANGVVLGTPERAGLRAVQTPQGFTTDLLLRSYQRGSLDLPAAEYTDDASLVEHIGGQVQVVDGDPLAFKITTKLDLLLAQAIVRG</sequence>